<accession>B6HRA4</accession>
<reference key="1">
    <citation type="journal article" date="2008" name="Nat. Biotechnol.">
        <title>Genome sequencing and analysis of the filamentous fungus Penicillium chrysogenum.</title>
        <authorList>
            <person name="van den Berg M.A."/>
            <person name="Albang R."/>
            <person name="Albermann K."/>
            <person name="Badger J.H."/>
            <person name="Daran J.-M."/>
            <person name="Driessen A.J.M."/>
            <person name="Garcia-Estrada C."/>
            <person name="Fedorova N.D."/>
            <person name="Harris D.M."/>
            <person name="Heijne W.H.M."/>
            <person name="Joardar V.S."/>
            <person name="Kiel J.A.K.W."/>
            <person name="Kovalchuk A."/>
            <person name="Martin J.F."/>
            <person name="Nierman W.C."/>
            <person name="Nijland J.G."/>
            <person name="Pronk J.T."/>
            <person name="Roubos J.A."/>
            <person name="van der Klei I.J."/>
            <person name="van Peij N.N.M.E."/>
            <person name="Veenhuis M."/>
            <person name="von Doehren H."/>
            <person name="Wagner C."/>
            <person name="Wortman J.R."/>
            <person name="Bovenberg R.A.L."/>
        </authorList>
    </citation>
    <scope>NUCLEOTIDE SEQUENCE [LARGE SCALE GENOMIC DNA]</scope>
    <source>
        <strain>ATCC 28089 / DSM 1075 / NRRL 1951 / Wisconsin 54-1255</strain>
    </source>
</reference>
<name>SDHF2_PENRW</name>
<organism>
    <name type="scientific">Penicillium rubens (strain ATCC 28089 / DSM 1075 / NRRL 1951 / Wisconsin 54-1255)</name>
    <name type="common">Penicillium chrysogenum</name>
    <dbReference type="NCBI Taxonomy" id="500485"/>
    <lineage>
        <taxon>Eukaryota</taxon>
        <taxon>Fungi</taxon>
        <taxon>Dikarya</taxon>
        <taxon>Ascomycota</taxon>
        <taxon>Pezizomycotina</taxon>
        <taxon>Eurotiomycetes</taxon>
        <taxon>Eurotiomycetidae</taxon>
        <taxon>Eurotiales</taxon>
        <taxon>Aspergillaceae</taxon>
        <taxon>Penicillium</taxon>
        <taxon>Penicillium chrysogenum species complex</taxon>
    </lineage>
</organism>
<gene>
    <name type="ORF">Pc22g03150</name>
</gene>
<sequence>MSAPRILHRVARPVPSSISTITRLNRQFGTTALRLKDGSDEASPEVKAHRANQANKAPNQFVPNTTSTMTKDFVNVGQKPAPPEMLNSANPNYRPSDPYPGRIEHFTGGRQDNGAQKPELGVGEMEGITFKVEPLKRVGEELATKRARLLYQSRKRGILESDLLLSTFADVYLGKMNYDQLVEYDSFLDENDWDIYYWATQDSPEEISPSTPKEDTITETWKESGAKSGEWAQTIGAFRAAYRPVPSRWQNSEVLALLREHVRDKSATGFEKAKNKKTGGGGGLGRMPDVQVFNSGHIVHRRHVLRMLYI</sequence>
<comment type="function">
    <text evidence="1">Plays an essential role in the assembly of succinate dehydrogenase (SDH), an enzyme complex (also referred to as respiratory complex II) that is a component of both the tricarboxylic acid (TCA) cycle and the mitochondrial electron transport chain, and which couples the oxidation of succinate to fumarate with the reduction of ubiquinone (coenzyme Q) to ubiquinol. Required for flavinylation (covalent attachment of FAD) of the flavoprotein subunit of the SDH catalytic dimer.</text>
</comment>
<comment type="subunit">
    <text evidence="1">Interacts with the flavoprotein subunit within the SDH catalytic dimer.</text>
</comment>
<comment type="subcellular location">
    <subcellularLocation>
        <location evidence="1">Mitochondrion matrix</location>
    </subcellularLocation>
</comment>
<comment type="miscellaneous">
    <text evidence="1">This protein may be expected to contain an N-terminal transit peptide but none has been predicted.</text>
</comment>
<comment type="similarity">
    <text evidence="1">Belongs to the SDHAF2 family.</text>
</comment>
<protein>
    <recommendedName>
        <fullName evidence="1">Succinate dehydrogenase assembly factor 2, mitochondrial</fullName>
        <shortName evidence="1">SDH assembly factor 2</shortName>
        <shortName evidence="1">SDHAF2</shortName>
    </recommendedName>
</protein>
<feature type="chain" id="PRO_0000383195" description="Succinate dehydrogenase assembly factor 2, mitochondrial">
    <location>
        <begin position="1"/>
        <end position="310"/>
    </location>
</feature>
<feature type="region of interest" description="Disordered" evidence="2">
    <location>
        <begin position="35"/>
        <end position="67"/>
    </location>
</feature>
<feature type="compositionally biased region" description="Basic and acidic residues" evidence="2">
    <location>
        <begin position="35"/>
        <end position="48"/>
    </location>
</feature>
<feature type="compositionally biased region" description="Polar residues" evidence="2">
    <location>
        <begin position="52"/>
        <end position="67"/>
    </location>
</feature>
<proteinExistence type="inferred from homology"/>
<keyword id="KW-0143">Chaperone</keyword>
<keyword id="KW-0496">Mitochondrion</keyword>
<keyword id="KW-1185">Reference proteome</keyword>
<dbReference type="EMBL" id="AM920437">
    <property type="protein sequence ID" value="CAP97603.1"/>
    <property type="molecule type" value="Genomic_DNA"/>
</dbReference>
<dbReference type="RefSeq" id="XP_002564358.1">
    <property type="nucleotide sequence ID" value="XM_002564312.1"/>
</dbReference>
<dbReference type="SMR" id="B6HRA4"/>
<dbReference type="STRING" id="500485.B6HRA4"/>
<dbReference type="GeneID" id="8311633"/>
<dbReference type="KEGG" id="pcs:N7525_005890"/>
<dbReference type="VEuPathDB" id="FungiDB:PCH_Pc22g03150"/>
<dbReference type="eggNOG" id="KOG3326">
    <property type="taxonomic scope" value="Eukaryota"/>
</dbReference>
<dbReference type="HOGENOM" id="CLU_943336_0_0_1"/>
<dbReference type="OMA" id="EMEGAKF"/>
<dbReference type="OrthoDB" id="284292at2759"/>
<dbReference type="BioCyc" id="PCHR:PC22G03150-MONOMER"/>
<dbReference type="Proteomes" id="UP000000724">
    <property type="component" value="Contig Pc00c22"/>
</dbReference>
<dbReference type="GO" id="GO:0005759">
    <property type="term" value="C:mitochondrial matrix"/>
    <property type="evidence" value="ECO:0000250"/>
    <property type="project" value="UniProtKB"/>
</dbReference>
<dbReference type="GO" id="GO:0006121">
    <property type="term" value="P:mitochondrial electron transport, succinate to ubiquinone"/>
    <property type="evidence" value="ECO:0000250"/>
    <property type="project" value="UniProtKB"/>
</dbReference>
<dbReference type="GO" id="GO:0034553">
    <property type="term" value="P:mitochondrial respiratory chain complex II assembly"/>
    <property type="evidence" value="ECO:0007669"/>
    <property type="project" value="TreeGrafter"/>
</dbReference>
<dbReference type="GO" id="GO:0018293">
    <property type="term" value="P:protein-FAD linkage"/>
    <property type="evidence" value="ECO:0000250"/>
    <property type="project" value="UniProtKB"/>
</dbReference>
<dbReference type="GO" id="GO:0006099">
    <property type="term" value="P:tricarboxylic acid cycle"/>
    <property type="evidence" value="ECO:0007669"/>
    <property type="project" value="TreeGrafter"/>
</dbReference>
<dbReference type="FunFam" id="1.10.150.250:FF:000002">
    <property type="entry name" value="Succinate dehydrogenase assembly factor 2, mitochondrial"/>
    <property type="match status" value="1"/>
</dbReference>
<dbReference type="Gene3D" id="1.10.150.250">
    <property type="entry name" value="Flavinator of succinate dehydrogenase"/>
    <property type="match status" value="1"/>
</dbReference>
<dbReference type="HAMAP" id="MF_03057">
    <property type="entry name" value="SDHAF2"/>
    <property type="match status" value="1"/>
</dbReference>
<dbReference type="InterPro" id="IPR005631">
    <property type="entry name" value="SDH"/>
</dbReference>
<dbReference type="InterPro" id="IPR036714">
    <property type="entry name" value="SDH_sf"/>
</dbReference>
<dbReference type="InterPro" id="IPR028882">
    <property type="entry name" value="SDHAF2"/>
</dbReference>
<dbReference type="PANTHER" id="PTHR12469">
    <property type="entry name" value="PROTEIN EMI5 HOMOLOG, MITOCHONDRIAL"/>
    <property type="match status" value="1"/>
</dbReference>
<dbReference type="PANTHER" id="PTHR12469:SF2">
    <property type="entry name" value="SUCCINATE DEHYDROGENASE ASSEMBLY FACTOR 2, MITOCHONDRIAL"/>
    <property type="match status" value="1"/>
</dbReference>
<dbReference type="Pfam" id="PF03937">
    <property type="entry name" value="Sdh5"/>
    <property type="match status" value="1"/>
</dbReference>
<dbReference type="SUPFAM" id="SSF109910">
    <property type="entry name" value="YgfY-like"/>
    <property type="match status" value="1"/>
</dbReference>
<evidence type="ECO:0000255" key="1">
    <source>
        <dbReference type="HAMAP-Rule" id="MF_03057"/>
    </source>
</evidence>
<evidence type="ECO:0000256" key="2">
    <source>
        <dbReference type="SAM" id="MobiDB-lite"/>
    </source>
</evidence>